<dbReference type="EMBL" id="CP001111">
    <property type="protein sequence ID" value="ACF49751.1"/>
    <property type="molecule type" value="Genomic_DNA"/>
</dbReference>
<dbReference type="RefSeq" id="WP_012509627.1">
    <property type="nucleotide sequence ID" value="NC_011071.1"/>
</dbReference>
<dbReference type="SMR" id="B4SRN1"/>
<dbReference type="STRING" id="391008.Smal_0046"/>
<dbReference type="KEGG" id="smt:Smal_0046"/>
<dbReference type="eggNOG" id="COG3131">
    <property type="taxonomic scope" value="Bacteria"/>
</dbReference>
<dbReference type="HOGENOM" id="CLU_023403_2_0_6"/>
<dbReference type="OrthoDB" id="335750at2"/>
<dbReference type="UniPathway" id="UPA00637"/>
<dbReference type="Proteomes" id="UP000001867">
    <property type="component" value="Chromosome"/>
</dbReference>
<dbReference type="GO" id="GO:0030288">
    <property type="term" value="C:outer membrane-bounded periplasmic space"/>
    <property type="evidence" value="ECO:0007669"/>
    <property type="project" value="TreeGrafter"/>
</dbReference>
<dbReference type="GO" id="GO:0030246">
    <property type="term" value="F:carbohydrate binding"/>
    <property type="evidence" value="ECO:0007669"/>
    <property type="project" value="InterPro"/>
</dbReference>
<dbReference type="GO" id="GO:0003824">
    <property type="term" value="F:catalytic activity"/>
    <property type="evidence" value="ECO:0007669"/>
    <property type="project" value="InterPro"/>
</dbReference>
<dbReference type="GO" id="GO:0051274">
    <property type="term" value="P:beta-glucan biosynthetic process"/>
    <property type="evidence" value="ECO:0007669"/>
    <property type="project" value="TreeGrafter"/>
</dbReference>
<dbReference type="FunFam" id="2.70.98.10:FF:000001">
    <property type="entry name" value="Glucans biosynthesis protein G"/>
    <property type="match status" value="1"/>
</dbReference>
<dbReference type="Gene3D" id="2.70.98.10">
    <property type="match status" value="1"/>
</dbReference>
<dbReference type="Gene3D" id="2.60.40.10">
    <property type="entry name" value="Immunoglobulins"/>
    <property type="match status" value="1"/>
</dbReference>
<dbReference type="HAMAP" id="MF_01068">
    <property type="entry name" value="MdoD_OpgD"/>
    <property type="match status" value="1"/>
</dbReference>
<dbReference type="InterPro" id="IPR011013">
    <property type="entry name" value="Gal_mutarotase_sf_dom"/>
</dbReference>
<dbReference type="InterPro" id="IPR014718">
    <property type="entry name" value="GH-type_carb-bd"/>
</dbReference>
<dbReference type="InterPro" id="IPR023724">
    <property type="entry name" value="Glucan_biosyn_MdoD"/>
</dbReference>
<dbReference type="InterPro" id="IPR014438">
    <property type="entry name" value="Glucan_biosyn_MdoG/MdoD"/>
</dbReference>
<dbReference type="InterPro" id="IPR007444">
    <property type="entry name" value="Glucan_biosyn_MdoG_C"/>
</dbReference>
<dbReference type="InterPro" id="IPR013783">
    <property type="entry name" value="Ig-like_fold"/>
</dbReference>
<dbReference type="InterPro" id="IPR014756">
    <property type="entry name" value="Ig_E-set"/>
</dbReference>
<dbReference type="PANTHER" id="PTHR30504">
    <property type="entry name" value="GLUCANS BIOSYNTHESIS PROTEIN"/>
    <property type="match status" value="1"/>
</dbReference>
<dbReference type="PANTHER" id="PTHR30504:SF3">
    <property type="entry name" value="GLUCANS BIOSYNTHESIS PROTEIN D"/>
    <property type="match status" value="1"/>
</dbReference>
<dbReference type="Pfam" id="PF04349">
    <property type="entry name" value="MdoG"/>
    <property type="match status" value="1"/>
</dbReference>
<dbReference type="PIRSF" id="PIRSF006281">
    <property type="entry name" value="MdoG"/>
    <property type="match status" value="1"/>
</dbReference>
<dbReference type="SUPFAM" id="SSF81296">
    <property type="entry name" value="E set domains"/>
    <property type="match status" value="1"/>
</dbReference>
<dbReference type="SUPFAM" id="SSF74650">
    <property type="entry name" value="Galactose mutarotase-like"/>
    <property type="match status" value="1"/>
</dbReference>
<name>OPGD_STRM5</name>
<comment type="function">
    <text evidence="1">Probably involved in the control of the structural glucose backbone of osmoregulated periplasmic glucans (OPGs).</text>
</comment>
<comment type="pathway">
    <text evidence="1">Glycan metabolism; osmoregulated periplasmic glucan (OPG) biosynthesis.</text>
</comment>
<comment type="subcellular location">
    <subcellularLocation>
        <location evidence="1">Periplasm</location>
    </subcellularLocation>
</comment>
<comment type="PTM">
    <text>Predicted to be exported by the Tat system. The position of the signal peptide cleavage has not been experimentally proven.</text>
</comment>
<comment type="similarity">
    <text evidence="1">Belongs to the OpgD/OpgG family.</text>
</comment>
<accession>B4SRN1</accession>
<reference key="1">
    <citation type="submission" date="2008-06" db="EMBL/GenBank/DDBJ databases">
        <title>Complete sequence of Stenotrophomonas maltophilia R551-3.</title>
        <authorList>
            <consortium name="US DOE Joint Genome Institute"/>
            <person name="Lucas S."/>
            <person name="Copeland A."/>
            <person name="Lapidus A."/>
            <person name="Glavina del Rio T."/>
            <person name="Dalin E."/>
            <person name="Tice H."/>
            <person name="Pitluck S."/>
            <person name="Chain P."/>
            <person name="Malfatti S."/>
            <person name="Shin M."/>
            <person name="Vergez L."/>
            <person name="Lang D."/>
            <person name="Schmutz J."/>
            <person name="Larimer F."/>
            <person name="Land M."/>
            <person name="Hauser L."/>
            <person name="Kyrpides N."/>
            <person name="Mikhailova N."/>
            <person name="Taghavi S."/>
            <person name="Monchy S."/>
            <person name="Newman L."/>
            <person name="Vangronsveld J."/>
            <person name="van der Lelie D."/>
            <person name="Richardson P."/>
        </authorList>
    </citation>
    <scope>NUCLEOTIDE SEQUENCE [LARGE SCALE GENOMIC DNA]</scope>
    <source>
        <strain>R551-3</strain>
    </source>
</reference>
<sequence>MQRRDFIRNASLALAAFGLPSLPACAASKSGQMGLRRLGQPQPFDFATLKGQARALAQAPYKSHKRVLPGRLEGLDWDQYQSIGYRQDHALWADQPGKFQAKFFHLGLYFHSPVRMFDVVDGKAQELAYDGAAFNYGKSGIKDGELPADLGFAGFRLNTRKDTDRDFAAFLGASYFRAVGKEGQYGQSARGLAIDTGMGKPEEFPDFIAYYLEQPSADSETIVVYGLLDSPSVAGAYRFAITNGDVLLMDIDSALYPRKAIERLGIAPCTSMYQVGENDRRMAWDWRPEIHDTDGLSLWTGAGEWIWRPLLNPRNLRFNMFVDRNPRGFGLLQRDRNFDHYQDDGVFYEKRPCLWVEPKGEWGEGSVQLVEIPTVDETFDNIVAFWNPKEKPQPGQELLVGYRLYWGAEPPARPPLAHCVASRTGLGGVVGKKREYFSWRFAVDFEGGELARLIDKGEVEAVVEASRGRVEIVSARPLREINGYRAMFDLVPPEGSTEQIDIRLFLRSGGKTLTETWLYQYTPPPAGAPERTLY</sequence>
<organism>
    <name type="scientific">Stenotrophomonas maltophilia (strain R551-3)</name>
    <dbReference type="NCBI Taxonomy" id="391008"/>
    <lineage>
        <taxon>Bacteria</taxon>
        <taxon>Pseudomonadati</taxon>
        <taxon>Pseudomonadota</taxon>
        <taxon>Gammaproteobacteria</taxon>
        <taxon>Lysobacterales</taxon>
        <taxon>Lysobacteraceae</taxon>
        <taxon>Stenotrophomonas</taxon>
        <taxon>Stenotrophomonas maltophilia group</taxon>
    </lineage>
</organism>
<keyword id="KW-0574">Periplasm</keyword>
<keyword id="KW-0732">Signal</keyword>
<gene>
    <name evidence="1" type="primary">opgD</name>
    <name type="ordered locus">Smal_0046</name>
</gene>
<protein>
    <recommendedName>
        <fullName evidence="1">Glucans biosynthesis protein D</fullName>
    </recommendedName>
</protein>
<proteinExistence type="inferred from homology"/>
<feature type="signal peptide" description="Tat-type signal" evidence="1">
    <location>
        <begin position="1"/>
        <end position="26"/>
    </location>
</feature>
<feature type="chain" id="PRO_5000389642" description="Glucans biosynthesis protein D">
    <location>
        <begin position="27"/>
        <end position="534"/>
    </location>
</feature>
<evidence type="ECO:0000255" key="1">
    <source>
        <dbReference type="HAMAP-Rule" id="MF_01068"/>
    </source>
</evidence>